<proteinExistence type="inferred from homology"/>
<sequence length="98" mass="11240">MFEQRVNSDVLTVSTVNSQDQVTQKPLRDSVKQALKNYFAQLNGQDVNDLYELVLAEVEQPLLDMVMQYTRGNQTRAALMMGINRGTLRKKLKKYGMN</sequence>
<gene>
    <name evidence="1" type="primary">fis</name>
    <name type="ordered locus">BWG_2960</name>
</gene>
<dbReference type="EMBL" id="CP001396">
    <property type="protein sequence ID" value="ACR63297.1"/>
    <property type="molecule type" value="Genomic_DNA"/>
</dbReference>
<dbReference type="RefSeq" id="WP_000462905.1">
    <property type="nucleotide sequence ID" value="NC_012759.1"/>
</dbReference>
<dbReference type="SMR" id="C4ZSZ7"/>
<dbReference type="GeneID" id="98390389"/>
<dbReference type="KEGG" id="ebw:BWG_2960"/>
<dbReference type="HOGENOM" id="CLU_158040_3_0_6"/>
<dbReference type="GO" id="GO:0003700">
    <property type="term" value="F:DNA-binding transcription factor activity"/>
    <property type="evidence" value="ECO:0007669"/>
    <property type="project" value="UniProtKB-UniRule"/>
</dbReference>
<dbReference type="GO" id="GO:0043565">
    <property type="term" value="F:sequence-specific DNA binding"/>
    <property type="evidence" value="ECO:0007669"/>
    <property type="project" value="InterPro"/>
</dbReference>
<dbReference type="FunFam" id="1.10.10.60:FF:000006">
    <property type="entry name" value="DNA-binding protein Fis"/>
    <property type="match status" value="1"/>
</dbReference>
<dbReference type="Gene3D" id="1.10.10.60">
    <property type="entry name" value="Homeodomain-like"/>
    <property type="match status" value="1"/>
</dbReference>
<dbReference type="HAMAP" id="MF_00166">
    <property type="entry name" value="DNA_binding_Fis"/>
    <property type="match status" value="1"/>
</dbReference>
<dbReference type="InterPro" id="IPR005412">
    <property type="entry name" value="Fis_DNA-bd"/>
</dbReference>
<dbReference type="InterPro" id="IPR009057">
    <property type="entry name" value="Homeodomain-like_sf"/>
</dbReference>
<dbReference type="InterPro" id="IPR002197">
    <property type="entry name" value="HTH_Fis"/>
</dbReference>
<dbReference type="InterPro" id="IPR050207">
    <property type="entry name" value="Trans_regulatory_Fis"/>
</dbReference>
<dbReference type="NCBIfam" id="NF001659">
    <property type="entry name" value="PRK00430.1"/>
    <property type="match status" value="1"/>
</dbReference>
<dbReference type="PANTHER" id="PTHR47918">
    <property type="entry name" value="DNA-BINDING PROTEIN FIS"/>
    <property type="match status" value="1"/>
</dbReference>
<dbReference type="PANTHER" id="PTHR47918:SF1">
    <property type="entry name" value="DNA-BINDING PROTEIN FIS"/>
    <property type="match status" value="1"/>
</dbReference>
<dbReference type="Pfam" id="PF02954">
    <property type="entry name" value="HTH_8"/>
    <property type="match status" value="1"/>
</dbReference>
<dbReference type="PIRSF" id="PIRSF002097">
    <property type="entry name" value="DNA-binding_Fis"/>
    <property type="match status" value="1"/>
</dbReference>
<dbReference type="PRINTS" id="PR01591">
    <property type="entry name" value="DNABINDNGFIS"/>
</dbReference>
<dbReference type="PRINTS" id="PR01590">
    <property type="entry name" value="HTHFIS"/>
</dbReference>
<dbReference type="SUPFAM" id="SSF46689">
    <property type="entry name" value="Homeodomain-like"/>
    <property type="match status" value="1"/>
</dbReference>
<protein>
    <recommendedName>
        <fullName evidence="1">DNA-binding protein Fis</fullName>
    </recommendedName>
</protein>
<reference key="1">
    <citation type="journal article" date="2009" name="J. Bacteriol.">
        <title>Genomic sequencing reveals regulatory mutations and recombinational events in the widely used MC4100 lineage of Escherichia coli K-12.</title>
        <authorList>
            <person name="Ferenci T."/>
            <person name="Zhou Z."/>
            <person name="Betteridge T."/>
            <person name="Ren Y."/>
            <person name="Liu Y."/>
            <person name="Feng L."/>
            <person name="Reeves P.R."/>
            <person name="Wang L."/>
        </authorList>
    </citation>
    <scope>NUCLEOTIDE SEQUENCE [LARGE SCALE GENOMIC DNA]</scope>
    <source>
        <strain>K12 / MC4100 / BW2952</strain>
    </source>
</reference>
<organism>
    <name type="scientific">Escherichia coli (strain K12 / MC4100 / BW2952)</name>
    <dbReference type="NCBI Taxonomy" id="595496"/>
    <lineage>
        <taxon>Bacteria</taxon>
        <taxon>Pseudomonadati</taxon>
        <taxon>Pseudomonadota</taxon>
        <taxon>Gammaproteobacteria</taxon>
        <taxon>Enterobacterales</taxon>
        <taxon>Enterobacteriaceae</taxon>
        <taxon>Escherichia</taxon>
    </lineage>
</organism>
<evidence type="ECO:0000255" key="1">
    <source>
        <dbReference type="HAMAP-Rule" id="MF_00166"/>
    </source>
</evidence>
<accession>C4ZSZ7</accession>
<comment type="function">
    <text evidence="1">Activates ribosomal RNA transcription. Plays a direct role in upstream activation of rRNA promoters.</text>
</comment>
<comment type="subunit">
    <text evidence="1">Homodimer.</text>
</comment>
<comment type="similarity">
    <text evidence="1">Belongs to the transcriptional regulatory Fis family.</text>
</comment>
<keyword id="KW-0010">Activator</keyword>
<keyword id="KW-0238">DNA-binding</keyword>
<keyword id="KW-0804">Transcription</keyword>
<keyword id="KW-0805">Transcription regulation</keyword>
<name>FIS_ECOBW</name>
<feature type="chain" id="PRO_1000203632" description="DNA-binding protein Fis">
    <location>
        <begin position="1"/>
        <end position="98"/>
    </location>
</feature>
<feature type="DNA-binding region" description="H-T-H motif" evidence="1">
    <location>
        <begin position="74"/>
        <end position="93"/>
    </location>
</feature>